<reference key="1">
    <citation type="journal article" date="2005" name="Genomics">
        <title>Trace amine-associated receptors form structurally and functionally distinct subfamilies of novel G protein-coupled receptors.</title>
        <authorList>
            <person name="Lindemann L."/>
            <person name="Ebeling M."/>
            <person name="Kratochwil N.A."/>
            <person name="Bunzow J.R."/>
            <person name="Grandy D.K."/>
            <person name="Hoener M.C."/>
        </authorList>
    </citation>
    <scope>NUCLEOTIDE SEQUENCE [GENOMIC DNA]</scope>
</reference>
<proteinExistence type="inferred from homology"/>
<evidence type="ECO:0000250" key="1">
    <source>
        <dbReference type="UniProtKB" id="O14804"/>
    </source>
</evidence>
<evidence type="ECO:0000250" key="2">
    <source>
        <dbReference type="UniProtKB" id="Q5QD04"/>
    </source>
</evidence>
<evidence type="ECO:0000250" key="3">
    <source>
        <dbReference type="UniProtKB" id="Q5QD14"/>
    </source>
</evidence>
<evidence type="ECO:0000255" key="4"/>
<evidence type="ECO:0000255" key="5">
    <source>
        <dbReference type="PROSITE-ProRule" id="PRU00521"/>
    </source>
</evidence>
<gene>
    <name type="primary">TAAR5</name>
</gene>
<feature type="chain" id="PRO_0000070156" description="Trace amine-associated receptor 5">
    <location>
        <begin position="1"/>
        <end position="337"/>
    </location>
</feature>
<feature type="topological domain" description="Extracellular" evidence="4">
    <location>
        <begin position="1"/>
        <end position="34"/>
    </location>
</feature>
<feature type="transmembrane region" description="Helical; Name=1" evidence="4">
    <location>
        <begin position="35"/>
        <end position="55"/>
    </location>
</feature>
<feature type="topological domain" description="Cytoplasmic" evidence="4">
    <location>
        <begin position="56"/>
        <end position="70"/>
    </location>
</feature>
<feature type="transmembrane region" description="Helical; Name=2" evidence="4">
    <location>
        <begin position="71"/>
        <end position="91"/>
    </location>
</feature>
<feature type="topological domain" description="Extracellular" evidence="4">
    <location>
        <begin position="92"/>
        <end position="109"/>
    </location>
</feature>
<feature type="transmembrane region" description="Helical; Name=3" evidence="4">
    <location>
        <begin position="110"/>
        <end position="130"/>
    </location>
</feature>
<feature type="topological domain" description="Cytoplasmic" evidence="4">
    <location>
        <begin position="131"/>
        <end position="154"/>
    </location>
</feature>
<feature type="transmembrane region" description="Helical; Name=4" evidence="4">
    <location>
        <begin position="155"/>
        <end position="175"/>
    </location>
</feature>
<feature type="topological domain" description="Extracellular" evidence="4">
    <location>
        <begin position="176"/>
        <end position="204"/>
    </location>
</feature>
<feature type="transmembrane region" description="Helical; Name=5" evidence="4">
    <location>
        <begin position="205"/>
        <end position="225"/>
    </location>
</feature>
<feature type="topological domain" description="Cytoplasmic" evidence="4">
    <location>
        <begin position="226"/>
        <end position="253"/>
    </location>
</feature>
<feature type="transmembrane region" description="Helical; Name=6" evidence="4">
    <location>
        <begin position="254"/>
        <end position="274"/>
    </location>
</feature>
<feature type="topological domain" description="Extracellular" evidence="4">
    <location>
        <begin position="275"/>
        <end position="284"/>
    </location>
</feature>
<feature type="transmembrane region" description="Helical; Name=7" evidence="4">
    <location>
        <begin position="285"/>
        <end position="307"/>
    </location>
</feature>
<feature type="topological domain" description="Cytoplasmic" evidence="4">
    <location>
        <begin position="308"/>
        <end position="337"/>
    </location>
</feature>
<feature type="region of interest" description="Extracellular Loop 2 (ECL2)" evidence="2">
    <location>
        <begin position="176"/>
        <end position="189"/>
    </location>
</feature>
<feature type="glycosylation site" description="N-linked (GlcNAc...) asparagine" evidence="4">
    <location>
        <position position="21"/>
    </location>
</feature>
<feature type="disulfide bond" evidence="3">
    <location>
        <begin position="24"/>
        <end position="188"/>
    </location>
</feature>
<feature type="disulfide bond" evidence="5">
    <location>
        <begin position="99"/>
        <end position="192"/>
    </location>
</feature>
<dbReference type="EMBL" id="AY702311">
    <property type="protein sequence ID" value="AAV70125.1"/>
    <property type="molecule type" value="Genomic_DNA"/>
</dbReference>
<dbReference type="RefSeq" id="NP_001009126.1">
    <property type="nucleotide sequence ID" value="NM_001009126.1"/>
</dbReference>
<dbReference type="SMR" id="Q5QD28"/>
<dbReference type="FunCoup" id="Q5QD28">
    <property type="interactions" value="515"/>
</dbReference>
<dbReference type="STRING" id="9598.ENSPTRP00000031768"/>
<dbReference type="GlyCosmos" id="Q5QD28">
    <property type="glycosylation" value="1 site, No reported glycans"/>
</dbReference>
<dbReference type="PaxDb" id="9598-ENSPTRP00000031768"/>
<dbReference type="Ensembl" id="ENSPTRT00000034368.3">
    <property type="protein sequence ID" value="ENSPTRP00000031768.2"/>
    <property type="gene ID" value="ENSPTRG00000018611.6"/>
</dbReference>
<dbReference type="GeneID" id="472128"/>
<dbReference type="KEGG" id="ptr:472128"/>
<dbReference type="CTD" id="9038"/>
<dbReference type="VGNC" id="VGNC:3719">
    <property type="gene designation" value="TAAR5"/>
</dbReference>
<dbReference type="eggNOG" id="KOG3656">
    <property type="taxonomic scope" value="Eukaryota"/>
</dbReference>
<dbReference type="GeneTree" id="ENSGT00940000161258"/>
<dbReference type="HOGENOM" id="CLU_009579_11_0_1"/>
<dbReference type="InParanoid" id="Q5QD28"/>
<dbReference type="OMA" id="PTIDLYQ"/>
<dbReference type="OrthoDB" id="5862at9604"/>
<dbReference type="TreeFam" id="TF343107"/>
<dbReference type="Proteomes" id="UP000002277">
    <property type="component" value="Chromosome 6"/>
</dbReference>
<dbReference type="GO" id="GO:0005886">
    <property type="term" value="C:plasma membrane"/>
    <property type="evidence" value="ECO:0000250"/>
    <property type="project" value="UniProtKB"/>
</dbReference>
<dbReference type="GO" id="GO:0001594">
    <property type="term" value="F:trace-amine receptor activity"/>
    <property type="evidence" value="ECO:0000250"/>
    <property type="project" value="UniProtKB"/>
</dbReference>
<dbReference type="GO" id="GO:1990081">
    <property type="term" value="F:trimethylamine receptor activity"/>
    <property type="evidence" value="ECO:0007669"/>
    <property type="project" value="Ensembl"/>
</dbReference>
<dbReference type="GO" id="GO:0007189">
    <property type="term" value="P:adenylate cyclase-activating G protein-coupled receptor signaling pathway"/>
    <property type="evidence" value="ECO:0000250"/>
    <property type="project" value="UniProtKB"/>
</dbReference>
<dbReference type="GO" id="GO:0050890">
    <property type="term" value="P:cognition"/>
    <property type="evidence" value="ECO:0000250"/>
    <property type="project" value="UniProtKB"/>
</dbReference>
<dbReference type="GO" id="GO:0007186">
    <property type="term" value="P:G protein-coupled receptor signaling pathway"/>
    <property type="evidence" value="ECO:0000318"/>
    <property type="project" value="GO_Central"/>
</dbReference>
<dbReference type="GO" id="GO:0007606">
    <property type="term" value="P:sensory perception of chemical stimulus"/>
    <property type="evidence" value="ECO:0007669"/>
    <property type="project" value="Ensembl"/>
</dbReference>
<dbReference type="CDD" id="cd15318">
    <property type="entry name" value="7tmA_TAAR5"/>
    <property type="match status" value="1"/>
</dbReference>
<dbReference type="FunFam" id="1.20.1070.10:FF:000030">
    <property type="entry name" value="trace amine-associated receptor 1"/>
    <property type="match status" value="1"/>
</dbReference>
<dbReference type="Gene3D" id="1.20.1070.10">
    <property type="entry name" value="Rhodopsin 7-helix transmembrane proteins"/>
    <property type="match status" value="1"/>
</dbReference>
<dbReference type="InterPro" id="IPR000276">
    <property type="entry name" value="GPCR_Rhodpsn"/>
</dbReference>
<dbReference type="InterPro" id="IPR017452">
    <property type="entry name" value="GPCR_Rhodpsn_7TM"/>
</dbReference>
<dbReference type="InterPro" id="IPR050569">
    <property type="entry name" value="TAAR"/>
</dbReference>
<dbReference type="InterPro" id="IPR009132">
    <property type="entry name" value="TAAR_fam"/>
</dbReference>
<dbReference type="PANTHER" id="PTHR24249">
    <property type="entry name" value="HISTAMINE RECEPTOR-RELATED G-PROTEIN COUPLED RECEPTOR"/>
    <property type="match status" value="1"/>
</dbReference>
<dbReference type="PANTHER" id="PTHR24249:SF307">
    <property type="entry name" value="TRACE AMINE-ASSOCIATED RECEPTOR 5"/>
    <property type="match status" value="1"/>
</dbReference>
<dbReference type="Pfam" id="PF00001">
    <property type="entry name" value="7tm_1"/>
    <property type="match status" value="1"/>
</dbReference>
<dbReference type="PRINTS" id="PR00237">
    <property type="entry name" value="GPCRRHODOPSN"/>
</dbReference>
<dbReference type="PRINTS" id="PR01830">
    <property type="entry name" value="TRACEAMINER"/>
</dbReference>
<dbReference type="SMART" id="SM01381">
    <property type="entry name" value="7TM_GPCR_Srsx"/>
    <property type="match status" value="1"/>
</dbReference>
<dbReference type="SUPFAM" id="SSF81321">
    <property type="entry name" value="Family A G protein-coupled receptor-like"/>
    <property type="match status" value="1"/>
</dbReference>
<dbReference type="PROSITE" id="PS00237">
    <property type="entry name" value="G_PROTEIN_RECEP_F1_1"/>
    <property type="match status" value="1"/>
</dbReference>
<dbReference type="PROSITE" id="PS50262">
    <property type="entry name" value="G_PROTEIN_RECEP_F1_2"/>
    <property type="match status" value="1"/>
</dbReference>
<sequence>MRAVFIQGAEEHPAAFCYQVNGSCPRTVHTLGIQLVIYLACAAGMLIIVLGNLFVAFAVSYFKALHTPTNFLLLSLALADMFLGLLVLPLSTIRSVESCWFFGDFLCRLHTYLDPLFCLTSIFHLCFISIDRHCAICDPLLYPSKFTVRVALRYILAGWGVPAAYTSLFLYTDVVETRLSQWLEEMPCVGSCQLLLNKFWGWLNFPLFFVPCLIMISLYVKIFVVATRQAQQITTLSKNLAGAAKHDRKAAKTLGIAVGIYLLCWLPFTIDTMVDSLLHFITPPLVFDIFIWFAYFNSACNPIIYVFSYQWFRKALKLTLSQKVFSPQTRTVDLYQE</sequence>
<accession>Q5QD28</accession>
<comment type="function">
    <text evidence="1">Olfactory receptor specific for trimethylamine, a trace amine (By similarity). Trimethylamine is a bacterial metabolite found in some animal odors (By similarity). Trimethylamine-binding causes a conformation change that triggers signaling via G(s)-class of G alpha proteins (GNAL or GNAS) (By similarity).</text>
</comment>
<comment type="subcellular location">
    <subcellularLocation>
        <location evidence="1">Cell membrane</location>
        <topology evidence="1">Multi-pass membrane protein</topology>
    </subcellularLocation>
</comment>
<comment type="domain">
    <text evidence="2">In addition to the well known disulfide bond common to G-protein coupled receptor 1 family, trace amine-associated receptors (TAARs) contain an unique disulfide bond (Cys-24-Cys-188) connecting the N-terminus to the extracellular Loop 2 (ECL2), which is required for agonist-induced receptor activation.</text>
</comment>
<comment type="similarity">
    <text evidence="5">Belongs to the G-protein coupled receptor 1 family.</text>
</comment>
<name>TAAR5_PANTR</name>
<protein>
    <recommendedName>
        <fullName>Trace amine-associated receptor 5</fullName>
        <shortName>TaR-5</shortName>
        <shortName>Trace amine receptor 5</shortName>
    </recommendedName>
</protein>
<organism>
    <name type="scientific">Pan troglodytes</name>
    <name type="common">Chimpanzee</name>
    <dbReference type="NCBI Taxonomy" id="9598"/>
    <lineage>
        <taxon>Eukaryota</taxon>
        <taxon>Metazoa</taxon>
        <taxon>Chordata</taxon>
        <taxon>Craniata</taxon>
        <taxon>Vertebrata</taxon>
        <taxon>Euteleostomi</taxon>
        <taxon>Mammalia</taxon>
        <taxon>Eutheria</taxon>
        <taxon>Euarchontoglires</taxon>
        <taxon>Primates</taxon>
        <taxon>Haplorrhini</taxon>
        <taxon>Catarrhini</taxon>
        <taxon>Hominidae</taxon>
        <taxon>Pan</taxon>
    </lineage>
</organism>
<keyword id="KW-1003">Cell membrane</keyword>
<keyword id="KW-1015">Disulfide bond</keyword>
<keyword id="KW-0297">G-protein coupled receptor</keyword>
<keyword id="KW-0325">Glycoprotein</keyword>
<keyword id="KW-0472">Membrane</keyword>
<keyword id="KW-0675">Receptor</keyword>
<keyword id="KW-1185">Reference proteome</keyword>
<keyword id="KW-0807">Transducer</keyword>
<keyword id="KW-0812">Transmembrane</keyword>
<keyword id="KW-1133">Transmembrane helix</keyword>